<protein>
    <recommendedName>
        <fullName evidence="1">UPF0235 protein Cpha266_2081</fullName>
    </recommendedName>
</protein>
<feature type="chain" id="PRO_1000072666" description="UPF0235 protein Cpha266_2081">
    <location>
        <begin position="1"/>
        <end position="101"/>
    </location>
</feature>
<evidence type="ECO:0000255" key="1">
    <source>
        <dbReference type="HAMAP-Rule" id="MF_00634"/>
    </source>
</evidence>
<comment type="similarity">
    <text evidence="1">Belongs to the UPF0235 family.</text>
</comment>
<keyword id="KW-1185">Reference proteome</keyword>
<gene>
    <name type="ordered locus">Cpha266_2081</name>
</gene>
<accession>A1BI66</accession>
<dbReference type="EMBL" id="CP000492">
    <property type="protein sequence ID" value="ABL66093.1"/>
    <property type="molecule type" value="Genomic_DNA"/>
</dbReference>
<dbReference type="RefSeq" id="WP_011745895.1">
    <property type="nucleotide sequence ID" value="NC_008639.1"/>
</dbReference>
<dbReference type="SMR" id="A1BI66"/>
<dbReference type="STRING" id="290317.Cpha266_2081"/>
<dbReference type="KEGG" id="cph:Cpha266_2081"/>
<dbReference type="eggNOG" id="COG1872">
    <property type="taxonomic scope" value="Bacteria"/>
</dbReference>
<dbReference type="HOGENOM" id="CLU_130694_6_0_10"/>
<dbReference type="OrthoDB" id="9800587at2"/>
<dbReference type="Proteomes" id="UP000008701">
    <property type="component" value="Chromosome"/>
</dbReference>
<dbReference type="GO" id="GO:0005737">
    <property type="term" value="C:cytoplasm"/>
    <property type="evidence" value="ECO:0007669"/>
    <property type="project" value="TreeGrafter"/>
</dbReference>
<dbReference type="Gene3D" id="3.30.1200.10">
    <property type="entry name" value="YggU-like"/>
    <property type="match status" value="1"/>
</dbReference>
<dbReference type="HAMAP" id="MF_00634">
    <property type="entry name" value="UPF0235"/>
    <property type="match status" value="1"/>
</dbReference>
<dbReference type="InterPro" id="IPR003746">
    <property type="entry name" value="DUF167"/>
</dbReference>
<dbReference type="InterPro" id="IPR036591">
    <property type="entry name" value="YggU-like_sf"/>
</dbReference>
<dbReference type="NCBIfam" id="TIGR00251">
    <property type="entry name" value="DUF167 family protein"/>
    <property type="match status" value="1"/>
</dbReference>
<dbReference type="PANTHER" id="PTHR13420">
    <property type="entry name" value="UPF0235 PROTEIN C15ORF40"/>
    <property type="match status" value="1"/>
</dbReference>
<dbReference type="PANTHER" id="PTHR13420:SF7">
    <property type="entry name" value="UPF0235 PROTEIN C15ORF40"/>
    <property type="match status" value="1"/>
</dbReference>
<dbReference type="Pfam" id="PF02594">
    <property type="entry name" value="DUF167"/>
    <property type="match status" value="1"/>
</dbReference>
<dbReference type="SMART" id="SM01152">
    <property type="entry name" value="DUF167"/>
    <property type="match status" value="1"/>
</dbReference>
<dbReference type="SUPFAM" id="SSF69786">
    <property type="entry name" value="YggU-like"/>
    <property type="match status" value="1"/>
</dbReference>
<proteinExistence type="inferred from homology"/>
<name>Y2081_CHLPD</name>
<organism>
    <name type="scientific">Chlorobium phaeobacteroides (strain DSM 266 / SMG 266 / 2430)</name>
    <dbReference type="NCBI Taxonomy" id="290317"/>
    <lineage>
        <taxon>Bacteria</taxon>
        <taxon>Pseudomonadati</taxon>
        <taxon>Chlorobiota</taxon>
        <taxon>Chlorobiia</taxon>
        <taxon>Chlorobiales</taxon>
        <taxon>Chlorobiaceae</taxon>
        <taxon>Chlorobium/Pelodictyon group</taxon>
        <taxon>Chlorobium</taxon>
    </lineage>
</organism>
<reference key="1">
    <citation type="submission" date="2006-12" db="EMBL/GenBank/DDBJ databases">
        <title>Complete sequence of Chlorobium phaeobacteroides DSM 266.</title>
        <authorList>
            <consortium name="US DOE Joint Genome Institute"/>
            <person name="Copeland A."/>
            <person name="Lucas S."/>
            <person name="Lapidus A."/>
            <person name="Barry K."/>
            <person name="Detter J.C."/>
            <person name="Glavina del Rio T."/>
            <person name="Hammon N."/>
            <person name="Israni S."/>
            <person name="Pitluck S."/>
            <person name="Goltsman E."/>
            <person name="Schmutz J."/>
            <person name="Larimer F."/>
            <person name="Land M."/>
            <person name="Hauser L."/>
            <person name="Mikhailova N."/>
            <person name="Li T."/>
            <person name="Overmann J."/>
            <person name="Bryant D.A."/>
            <person name="Richardson P."/>
        </authorList>
    </citation>
    <scope>NUCLEOTIDE SEQUENCE [LARGE SCALE GENOMIC DNA]</scope>
    <source>
        <strain>DSM 266 / SMG 266 / 2430</strain>
    </source>
</reference>
<sequence length="101" mass="10615">MMISGVEISEKSGSAVFRLKAQPRSSKSAISGAYNGGVKVNLKAAPVDDAANRECCDLFAKVLSVSSSRLTILSGKSSKNKTIKVEGLGAEEVALLLRPYL</sequence>